<keyword id="KW-0119">Carbohydrate metabolism</keyword>
<keyword id="KW-0150">Chloroplast</keyword>
<keyword id="KW-0313">Glucose metabolism</keyword>
<keyword id="KW-0413">Isomerase</keyword>
<keyword id="KW-0460">Magnesium</keyword>
<keyword id="KW-0479">Metal-binding</keyword>
<keyword id="KW-0597">Phosphoprotein</keyword>
<keyword id="KW-0934">Plastid</keyword>
<keyword id="KW-1185">Reference proteome</keyword>
<keyword id="KW-0809">Transit peptide</keyword>
<reference key="1">
    <citation type="journal article" date="2000" name="Plant Physiol.">
        <title>The plastidic phosphoglucomutase from Arabidopsis. A reversible enzyme reaction with an important role in metabolic control.</title>
        <authorList>
            <person name="Periappuram C."/>
            <person name="Steinhauer L."/>
            <person name="Barton D.L."/>
            <person name="Taylor D.C."/>
            <person name="Chatson B."/>
            <person name="Zou J."/>
        </authorList>
    </citation>
    <scope>NUCLEOTIDE SEQUENCE [MRNA]</scope>
    <scope>FUNCTION</scope>
    <scope>CATALYTIC ACTIVITY</scope>
    <scope>BIOPHYSICOCHEMICAL PROPERTIES</scope>
    <scope>TISSUE SPECIFICITY</scope>
    <scope>DISRUPTION PHENOTYPE</scope>
    <scope>ACTIVITY REGULATION</scope>
    <source>
        <strain>cv. Columbia</strain>
    </source>
</reference>
<reference key="2">
    <citation type="journal article" date="2000" name="Mol. Gen. Genet.">
        <title>Molecular characterisation of a new mutant allele of the plastid phosphoglucomutase in Arabidopsis, and complementation of the mutant with the wild-type cDNA.</title>
        <authorList>
            <person name="Kofler H."/>
            <person name="Haeusler R.E."/>
            <person name="Schulz B."/>
            <person name="Groener F."/>
            <person name="Fluegge U.-I."/>
            <person name="Weber A."/>
        </authorList>
    </citation>
    <scope>NUCLEOTIDE SEQUENCE [GENOMIC DNA]</scope>
    <source>
        <strain>cv. Columbia</strain>
    </source>
</reference>
<reference key="3">
    <citation type="journal article" date="1998" name="DNA Res.">
        <title>Structural analysis of Arabidopsis thaliana chromosome 5. IV. Sequence features of the regions of 1,456,315 bp covered by nineteen physically assigned P1 and TAC clones.</title>
        <authorList>
            <person name="Sato S."/>
            <person name="Kaneko T."/>
            <person name="Kotani H."/>
            <person name="Nakamura Y."/>
            <person name="Asamizu E."/>
            <person name="Miyajima N."/>
            <person name="Tabata S."/>
        </authorList>
    </citation>
    <scope>NUCLEOTIDE SEQUENCE [LARGE SCALE GENOMIC DNA]</scope>
    <source>
        <strain>cv. Columbia</strain>
    </source>
</reference>
<reference key="4">
    <citation type="journal article" date="2017" name="Plant J.">
        <title>Araport11: a complete reannotation of the Arabidopsis thaliana reference genome.</title>
        <authorList>
            <person name="Cheng C.Y."/>
            <person name="Krishnakumar V."/>
            <person name="Chan A.P."/>
            <person name="Thibaud-Nissen F."/>
            <person name="Schobel S."/>
            <person name="Town C.D."/>
        </authorList>
    </citation>
    <scope>GENOME REANNOTATION</scope>
    <source>
        <strain>cv. Columbia</strain>
    </source>
</reference>
<reference key="5">
    <citation type="journal article" date="2003" name="Science">
        <title>Empirical analysis of transcriptional activity in the Arabidopsis genome.</title>
        <authorList>
            <person name="Yamada K."/>
            <person name="Lim J."/>
            <person name="Dale J.M."/>
            <person name="Chen H."/>
            <person name="Shinn P."/>
            <person name="Palm C.J."/>
            <person name="Southwick A.M."/>
            <person name="Wu H.C."/>
            <person name="Kim C.J."/>
            <person name="Nguyen M."/>
            <person name="Pham P.K."/>
            <person name="Cheuk R.F."/>
            <person name="Karlin-Newmann G."/>
            <person name="Liu S.X."/>
            <person name="Lam B."/>
            <person name="Sakano H."/>
            <person name="Wu T."/>
            <person name="Yu G."/>
            <person name="Miranda M."/>
            <person name="Quach H.L."/>
            <person name="Tripp M."/>
            <person name="Chang C.H."/>
            <person name="Lee J.M."/>
            <person name="Toriumi M.J."/>
            <person name="Chan M.M."/>
            <person name="Tang C.C."/>
            <person name="Onodera C.S."/>
            <person name="Deng J.M."/>
            <person name="Akiyama K."/>
            <person name="Ansari Y."/>
            <person name="Arakawa T."/>
            <person name="Banh J."/>
            <person name="Banno F."/>
            <person name="Bowser L."/>
            <person name="Brooks S.Y."/>
            <person name="Carninci P."/>
            <person name="Chao Q."/>
            <person name="Choy N."/>
            <person name="Enju A."/>
            <person name="Goldsmith A.D."/>
            <person name="Gurjal M."/>
            <person name="Hansen N.F."/>
            <person name="Hayashizaki Y."/>
            <person name="Johnson-Hopson C."/>
            <person name="Hsuan V.W."/>
            <person name="Iida K."/>
            <person name="Karnes M."/>
            <person name="Khan S."/>
            <person name="Koesema E."/>
            <person name="Ishida J."/>
            <person name="Jiang P.X."/>
            <person name="Jones T."/>
            <person name="Kawai J."/>
            <person name="Kamiya A."/>
            <person name="Meyers C."/>
            <person name="Nakajima M."/>
            <person name="Narusaka M."/>
            <person name="Seki M."/>
            <person name="Sakurai T."/>
            <person name="Satou M."/>
            <person name="Tamse R."/>
            <person name="Vaysberg M."/>
            <person name="Wallender E.K."/>
            <person name="Wong C."/>
            <person name="Yamamura Y."/>
            <person name="Yuan S."/>
            <person name="Shinozaki K."/>
            <person name="Davis R.W."/>
            <person name="Theologis A."/>
            <person name="Ecker J.R."/>
        </authorList>
    </citation>
    <scope>NUCLEOTIDE SEQUENCE [LARGE SCALE MRNA]</scope>
    <source>
        <strain>cv. Columbia</strain>
    </source>
</reference>
<reference key="6">
    <citation type="journal article" date="2009" name="Plant Physiol.">
        <title>Large-scale Arabidopsis phosphoproteome profiling reveals novel chloroplast kinase substrates and phosphorylation networks.</title>
        <authorList>
            <person name="Reiland S."/>
            <person name="Messerli G."/>
            <person name="Baerenfaller K."/>
            <person name="Gerrits B."/>
            <person name="Endler A."/>
            <person name="Grossmann J."/>
            <person name="Gruissem W."/>
            <person name="Baginsky S."/>
        </authorList>
    </citation>
    <scope>IDENTIFICATION BY MASS SPECTROMETRY [LARGE SCALE ANALYSIS]</scope>
</reference>
<reference key="7">
    <citation type="journal article" date="2021" name="Front. Plant Sci.">
        <title>EARLY STARVATION 1 is a functionally conserved protein promoting gravitropic responses in plants by forming starch granules.</title>
        <authorList>
            <person name="Song K."/>
            <person name="Lee D.-W."/>
            <person name="Kim J."/>
            <person name="Kim J."/>
            <person name="Guim H."/>
            <person name="Kim K."/>
            <person name="Jeon J.-S."/>
            <person name="Choi G."/>
        </authorList>
    </citation>
    <scope>FUNCTION</scope>
    <scope>DISRUPTION PHENOTYPE</scope>
    <scope>NOMENCLATURE</scope>
    <source>
        <strain>cv. Columbia</strain>
    </source>
</reference>
<evidence type="ECO:0000250" key="1">
    <source>
        <dbReference type="UniProtKB" id="P00949"/>
    </source>
</evidence>
<evidence type="ECO:0000250" key="2">
    <source>
        <dbReference type="UniProtKB" id="P36871"/>
    </source>
</evidence>
<evidence type="ECO:0000255" key="3"/>
<evidence type="ECO:0000269" key="4">
    <source>
    </source>
</evidence>
<evidence type="ECO:0000269" key="5">
    <source>
    </source>
</evidence>
<evidence type="ECO:0000303" key="6">
    <source>
    </source>
</evidence>
<evidence type="ECO:0000303" key="7">
    <source>
    </source>
</evidence>
<evidence type="ECO:0000305" key="8"/>
<evidence type="ECO:0000305" key="9">
    <source>
    </source>
</evidence>
<evidence type="ECO:0000312" key="10">
    <source>
        <dbReference type="Araport" id="AT5G51820"/>
    </source>
</evidence>
<evidence type="ECO:0000312" key="11">
    <source>
        <dbReference type="EMBL" id="BAB11251.1"/>
    </source>
</evidence>
<dbReference type="EC" id="5.4.2.2" evidence="4"/>
<dbReference type="EMBL" id="AJ242601">
    <property type="protein sequence ID" value="CAB64725.1"/>
    <property type="molecule type" value="mRNA"/>
</dbReference>
<dbReference type="EMBL" id="AF216580">
    <property type="protein sequence ID" value="AAG44095.1"/>
    <property type="molecule type" value="mRNA"/>
</dbReference>
<dbReference type="EMBL" id="AB010074">
    <property type="protein sequence ID" value="BAB11251.1"/>
    <property type="molecule type" value="Genomic_DNA"/>
</dbReference>
<dbReference type="EMBL" id="CP002688">
    <property type="protein sequence ID" value="AED96131.1"/>
    <property type="molecule type" value="Genomic_DNA"/>
</dbReference>
<dbReference type="EMBL" id="AY099708">
    <property type="protein sequence ID" value="AAM20559.1"/>
    <property type="molecule type" value="mRNA"/>
</dbReference>
<dbReference type="EMBL" id="AY128901">
    <property type="protein sequence ID" value="AAM91301.1"/>
    <property type="molecule type" value="mRNA"/>
</dbReference>
<dbReference type="PIR" id="T52656">
    <property type="entry name" value="T52656"/>
</dbReference>
<dbReference type="RefSeq" id="NP_199995.1">
    <property type="nucleotide sequence ID" value="NM_124561.3"/>
</dbReference>
<dbReference type="SMR" id="Q9SCY0"/>
<dbReference type="BioGRID" id="20502">
    <property type="interactions" value="1"/>
</dbReference>
<dbReference type="FunCoup" id="Q9SCY0">
    <property type="interactions" value="2460"/>
</dbReference>
<dbReference type="STRING" id="3702.Q9SCY0"/>
<dbReference type="iPTMnet" id="Q9SCY0"/>
<dbReference type="MetOSite" id="Q9SCY0"/>
<dbReference type="PaxDb" id="3702-AT5G51820.1"/>
<dbReference type="ProteomicsDB" id="236407"/>
<dbReference type="EnsemblPlants" id="AT5G51820.1">
    <property type="protein sequence ID" value="AT5G51820.1"/>
    <property type="gene ID" value="AT5G51820"/>
</dbReference>
<dbReference type="GeneID" id="835257"/>
<dbReference type="Gramene" id="AT5G51820.1">
    <property type="protein sequence ID" value="AT5G51820.1"/>
    <property type="gene ID" value="AT5G51820"/>
</dbReference>
<dbReference type="KEGG" id="ath:AT5G51820"/>
<dbReference type="Araport" id="AT5G51820"/>
<dbReference type="TAIR" id="AT5G51820">
    <property type="gene designation" value="PGM"/>
</dbReference>
<dbReference type="eggNOG" id="KOG0625">
    <property type="taxonomic scope" value="Eukaryota"/>
</dbReference>
<dbReference type="HOGENOM" id="CLU_009330_0_1_1"/>
<dbReference type="InParanoid" id="Q9SCY0"/>
<dbReference type="OMA" id="YIPDYAG"/>
<dbReference type="PhylomeDB" id="Q9SCY0"/>
<dbReference type="BioCyc" id="ARA:AT5G51820-MONOMER"/>
<dbReference type="BioCyc" id="MetaCyc:AT5G51820-MONOMER"/>
<dbReference type="BRENDA" id="5.4.2.2">
    <property type="organism ID" value="399"/>
</dbReference>
<dbReference type="SABIO-RK" id="Q9SCY0"/>
<dbReference type="PRO" id="PR:Q9SCY0"/>
<dbReference type="Proteomes" id="UP000006548">
    <property type="component" value="Chromosome 5"/>
</dbReference>
<dbReference type="ExpressionAtlas" id="Q9SCY0">
    <property type="expression patterns" value="baseline and differential"/>
</dbReference>
<dbReference type="GO" id="GO:0048046">
    <property type="term" value="C:apoplast"/>
    <property type="evidence" value="ECO:0007005"/>
    <property type="project" value="TAIR"/>
</dbReference>
<dbReference type="GO" id="GO:0009507">
    <property type="term" value="C:chloroplast"/>
    <property type="evidence" value="ECO:0007005"/>
    <property type="project" value="TAIR"/>
</dbReference>
<dbReference type="GO" id="GO:0009941">
    <property type="term" value="C:chloroplast envelope"/>
    <property type="evidence" value="ECO:0007005"/>
    <property type="project" value="TAIR"/>
</dbReference>
<dbReference type="GO" id="GO:0009570">
    <property type="term" value="C:chloroplast stroma"/>
    <property type="evidence" value="ECO:0000314"/>
    <property type="project" value="TAIR"/>
</dbReference>
<dbReference type="GO" id="GO:0005829">
    <property type="term" value="C:cytosol"/>
    <property type="evidence" value="ECO:0007005"/>
    <property type="project" value="TAIR"/>
</dbReference>
<dbReference type="GO" id="GO:0010319">
    <property type="term" value="C:stromule"/>
    <property type="evidence" value="ECO:0000314"/>
    <property type="project" value="TAIR"/>
</dbReference>
<dbReference type="GO" id="GO:0000287">
    <property type="term" value="F:magnesium ion binding"/>
    <property type="evidence" value="ECO:0007669"/>
    <property type="project" value="InterPro"/>
</dbReference>
<dbReference type="GO" id="GO:0004614">
    <property type="term" value="F:phosphoglucomutase activity"/>
    <property type="evidence" value="ECO:0000314"/>
    <property type="project" value="TAIR"/>
</dbReference>
<dbReference type="GO" id="GO:0005975">
    <property type="term" value="P:carbohydrate metabolic process"/>
    <property type="evidence" value="ECO:0000315"/>
    <property type="project" value="TAIR"/>
</dbReference>
<dbReference type="GO" id="GO:0009590">
    <property type="term" value="P:detection of gravity"/>
    <property type="evidence" value="ECO:0000315"/>
    <property type="project" value="TAIR"/>
</dbReference>
<dbReference type="GO" id="GO:0006006">
    <property type="term" value="P:glucose metabolic process"/>
    <property type="evidence" value="ECO:0007669"/>
    <property type="project" value="UniProtKB-KW"/>
</dbReference>
<dbReference type="GO" id="GO:0009409">
    <property type="term" value="P:response to cold"/>
    <property type="evidence" value="ECO:0000270"/>
    <property type="project" value="TAIR"/>
</dbReference>
<dbReference type="GO" id="GO:0019252">
    <property type="term" value="P:starch biosynthetic process"/>
    <property type="evidence" value="ECO:0000315"/>
    <property type="project" value="TAIR"/>
</dbReference>
<dbReference type="CDD" id="cd03085">
    <property type="entry name" value="PGM1"/>
    <property type="match status" value="1"/>
</dbReference>
<dbReference type="FunFam" id="3.30.310.50:FF:000002">
    <property type="entry name" value="Phosphoglucomutase 5"/>
    <property type="match status" value="1"/>
</dbReference>
<dbReference type="FunFam" id="3.40.120.10:FF:000004">
    <property type="entry name" value="Phosphoglucomutase 5"/>
    <property type="match status" value="1"/>
</dbReference>
<dbReference type="FunFam" id="3.40.120.10:FF:000005">
    <property type="entry name" value="Phosphoglucomutase 5"/>
    <property type="match status" value="1"/>
</dbReference>
<dbReference type="FunFam" id="3.40.120.10:FF:000009">
    <property type="entry name" value="Phosphoglucomutase, cytoplasmic 1"/>
    <property type="match status" value="1"/>
</dbReference>
<dbReference type="Gene3D" id="3.40.120.10">
    <property type="entry name" value="Alpha-D-Glucose-1,6-Bisphosphate, subunit A, domain 3"/>
    <property type="match status" value="3"/>
</dbReference>
<dbReference type="Gene3D" id="3.30.310.50">
    <property type="entry name" value="Alpha-D-phosphohexomutase, C-terminal domain"/>
    <property type="match status" value="1"/>
</dbReference>
<dbReference type="InterPro" id="IPR005844">
    <property type="entry name" value="A-D-PHexomutase_a/b/a-I"/>
</dbReference>
<dbReference type="InterPro" id="IPR016055">
    <property type="entry name" value="A-D-PHexomutase_a/b/a-I/II/III"/>
</dbReference>
<dbReference type="InterPro" id="IPR005845">
    <property type="entry name" value="A-D-PHexomutase_a/b/a-II"/>
</dbReference>
<dbReference type="InterPro" id="IPR005846">
    <property type="entry name" value="A-D-PHexomutase_a/b/a-III"/>
</dbReference>
<dbReference type="InterPro" id="IPR036900">
    <property type="entry name" value="A-D-PHexomutase_C_sf"/>
</dbReference>
<dbReference type="InterPro" id="IPR016066">
    <property type="entry name" value="A-D-PHexomutase_CS"/>
</dbReference>
<dbReference type="InterPro" id="IPR005841">
    <property type="entry name" value="Alpha-D-phosphohexomutase_SF"/>
</dbReference>
<dbReference type="InterPro" id="IPR045244">
    <property type="entry name" value="PGM"/>
</dbReference>
<dbReference type="NCBIfam" id="NF005737">
    <property type="entry name" value="PRK07564.1-1"/>
    <property type="match status" value="1"/>
</dbReference>
<dbReference type="PANTHER" id="PTHR22573:SF59">
    <property type="entry name" value="PHOSPHOGLUCOMUTASE, CHLOROPLASTIC"/>
    <property type="match status" value="1"/>
</dbReference>
<dbReference type="PANTHER" id="PTHR22573">
    <property type="entry name" value="PHOSPHOHEXOMUTASE FAMILY MEMBER"/>
    <property type="match status" value="1"/>
</dbReference>
<dbReference type="Pfam" id="PF24947">
    <property type="entry name" value="PGM1_C_vert_fung"/>
    <property type="match status" value="1"/>
</dbReference>
<dbReference type="Pfam" id="PF02878">
    <property type="entry name" value="PGM_PMM_I"/>
    <property type="match status" value="1"/>
</dbReference>
<dbReference type="Pfam" id="PF02879">
    <property type="entry name" value="PGM_PMM_II"/>
    <property type="match status" value="1"/>
</dbReference>
<dbReference type="Pfam" id="PF02880">
    <property type="entry name" value="PGM_PMM_III"/>
    <property type="match status" value="1"/>
</dbReference>
<dbReference type="PRINTS" id="PR00509">
    <property type="entry name" value="PGMPMM"/>
</dbReference>
<dbReference type="SUPFAM" id="SSF55957">
    <property type="entry name" value="Phosphoglucomutase, C-terminal domain"/>
    <property type="match status" value="1"/>
</dbReference>
<dbReference type="SUPFAM" id="SSF53738">
    <property type="entry name" value="Phosphoglucomutase, first 3 domains"/>
    <property type="match status" value="3"/>
</dbReference>
<dbReference type="PROSITE" id="PS00710">
    <property type="entry name" value="PGM_PMM"/>
    <property type="match status" value="1"/>
</dbReference>
<feature type="transit peptide" description="Chloroplast" evidence="3">
    <location>
        <begin position="1"/>
        <end position="63"/>
    </location>
</feature>
<feature type="chain" id="PRO_0000023895" description="Phosphoglucomutase, chloroplastic">
    <location>
        <begin position="64"/>
        <end position="623"/>
    </location>
</feature>
<feature type="active site" description="Phosphoserine intermediate" evidence="1">
    <location>
        <position position="181"/>
    </location>
</feature>
<feature type="binding site" evidence="1">
    <location>
        <position position="88"/>
    </location>
    <ligand>
        <name>alpha-D-glucose 1,6-bisphosphate</name>
        <dbReference type="ChEBI" id="CHEBI:58392"/>
    </ligand>
</feature>
<feature type="binding site" evidence="1">
    <location>
        <position position="181"/>
    </location>
    <ligand>
        <name>alpha-D-glucose 1,6-bisphosphate</name>
        <dbReference type="ChEBI" id="CHEBI:58392"/>
    </ligand>
</feature>
<feature type="binding site" description="via phosphate group" evidence="1">
    <location>
        <position position="181"/>
    </location>
    <ligand>
        <name>Mg(2+)</name>
        <dbReference type="ChEBI" id="CHEBI:18420"/>
    </ligand>
</feature>
<feature type="binding site" evidence="1">
    <location>
        <position position="346"/>
    </location>
    <ligand>
        <name>Mg(2+)</name>
        <dbReference type="ChEBI" id="CHEBI:18420"/>
    </ligand>
</feature>
<feature type="binding site" evidence="1">
    <location>
        <position position="348"/>
    </location>
    <ligand>
        <name>Mg(2+)</name>
        <dbReference type="ChEBI" id="CHEBI:18420"/>
    </ligand>
</feature>
<feature type="binding site" evidence="1">
    <location>
        <position position="350"/>
    </location>
    <ligand>
        <name>alpha-D-glucose 1,6-bisphosphate</name>
        <dbReference type="ChEBI" id="CHEBI:58392"/>
    </ligand>
</feature>
<feature type="binding site" evidence="1">
    <location>
        <position position="350"/>
    </location>
    <ligand>
        <name>Mg(2+)</name>
        <dbReference type="ChEBI" id="CHEBI:18420"/>
    </ligand>
</feature>
<feature type="binding site" evidence="1">
    <location>
        <position position="351"/>
    </location>
    <ligand>
        <name>alpha-D-glucose 1,6-bisphosphate</name>
        <dbReference type="ChEBI" id="CHEBI:58392"/>
    </ligand>
</feature>
<feature type="binding site" evidence="1">
    <location>
        <position position="414"/>
    </location>
    <ligand>
        <name>alpha-D-glucose 1,6-bisphosphate</name>
        <dbReference type="ChEBI" id="CHEBI:58392"/>
    </ligand>
</feature>
<feature type="binding site" evidence="1">
    <location>
        <position position="433"/>
    </location>
    <ligand>
        <name>alpha-D-glucose 1,6-bisphosphate</name>
        <dbReference type="ChEBI" id="CHEBI:58392"/>
    </ligand>
</feature>
<feature type="binding site" evidence="1">
    <location>
        <position position="435"/>
    </location>
    <ligand>
        <name>alpha-D-glucose 1,6-bisphosphate</name>
        <dbReference type="ChEBI" id="CHEBI:58392"/>
    </ligand>
</feature>
<feature type="binding site" evidence="1">
    <location>
        <position position="446"/>
    </location>
    <ligand>
        <name>alpha-D-glucose 1,6-bisphosphate</name>
        <dbReference type="ChEBI" id="CHEBI:58392"/>
    </ligand>
</feature>
<feature type="modified residue" description="Phosphoserine" evidence="1">
    <location>
        <position position="181"/>
    </location>
</feature>
<feature type="sequence conflict" description="In Ref. 1; CAB64725." evidence="8" ref="1">
    <original>G</original>
    <variation>V</variation>
    <location>
        <position position="439"/>
    </location>
</feature>
<sequence length="623" mass="67989">MTSTYTRFDTVFLFSRFAGAKYSPLLPSPSFTLSTSGIHIRTKPNSRFHSIIASSSSSSVVAGTDSIEIKSLPTKPIEGQKTGTSGLRKKVKVFMEDNYLANWIQALFNSLPLEDYKNATLVLGGDGRYFNKEASQIIIKIAAGNGVGQILVGKEGILSTPAVSAVIRKRKANGGFIMSASHNPGGPEYDWGIKFNYSSGQPAPETITDKIYGNTLSISEIKVAEIPDIDLSQVGVTKYGNFSVEVIDPVSDYLELMEDVFDFDLIRGLLSRSDFGFMFDAMHAVTGAYAKPIFVDNLGAKPDSISNGVPLEDFGHGHPDPNLTYAKDLVDVMYRDNGPDFGAASDGDGDRNMVLGNKFFVTPSDSVAIIAANAQEAIPYFRAGPKGLARSMPTSGALDRVAEKLKLPFFEVPTGWKFFGNLMDAGKLSICGEESFGTGSDHIREKDGIWAVLAWLSILAHRNKDTKPGDKLVSVADVVKEYWATYGRNFFSRYDYEECESEGANKMIEYLREILSKSKAGDVYGNYVLQFADDFSYTDPVDGSVASKQGVRFVFTDGSRIIFRLSGTGSAGATVRIYIEQFEPDVSKHDVDAQIALKPLIDLALSVSKLKDFTGREKPTVIT</sequence>
<name>PGMP_ARATH</name>
<accession>Q9SCY0</accession>
<proteinExistence type="evidence at protein level"/>
<protein>
    <recommendedName>
        <fullName evidence="6">Phosphoglucomutase, chloroplastic</fullName>
        <shortName evidence="8">PGM</shortName>
        <ecNumber evidence="4">5.4.2.2</ecNumber>
    </recommendedName>
    <alternativeName>
        <fullName evidence="8">Glucose phosphomutase</fullName>
    </alternativeName>
    <alternativeName>
        <fullName evidence="7">Protein REDUCED GRAVITROPIC 2</fullName>
    </alternativeName>
</protein>
<gene>
    <name evidence="6" type="primary">PGMP</name>
    <name evidence="6" type="synonym">PGM</name>
    <name evidence="7" type="synonym">RGV2</name>
    <name evidence="10" type="ordered locus">At5g51820</name>
    <name evidence="11" type="ORF">MIO24.4</name>
</gene>
<organism>
    <name type="scientific">Arabidopsis thaliana</name>
    <name type="common">Mouse-ear cress</name>
    <dbReference type="NCBI Taxonomy" id="3702"/>
    <lineage>
        <taxon>Eukaryota</taxon>
        <taxon>Viridiplantae</taxon>
        <taxon>Streptophyta</taxon>
        <taxon>Embryophyta</taxon>
        <taxon>Tracheophyta</taxon>
        <taxon>Spermatophyta</taxon>
        <taxon>Magnoliopsida</taxon>
        <taxon>eudicotyledons</taxon>
        <taxon>Gunneridae</taxon>
        <taxon>Pentapetalae</taxon>
        <taxon>rosids</taxon>
        <taxon>malvids</taxon>
        <taxon>Brassicales</taxon>
        <taxon>Brassicaceae</taxon>
        <taxon>Camelineae</taxon>
        <taxon>Arabidopsis</taxon>
    </lineage>
</organism>
<comment type="function">
    <text evidence="2 4 5 9">Catalyzes the reversible isomerization of alpha-D-glucose 1-phosphate to alpha-D-glucose 6-phosphate (PubMed:10759515). The mechanism proceeds via the intermediate compound alpha-D-glucose 1,6-bisphosphate (Probable). This enzyme participates in both the breakdown and synthesis of glucose (By similarity). Factor that affects seed oil content (PubMed:10759515). Accumulated starch in young embryos may play an important role in providing carbon resources for seed storage lipid biosynthesis in oilseed plants (Probable). Promotes gravitropic responses, negative in shoots but positive in roots, by facilitating starch granules (statoliths) formation in hypocotyls and roots columella (PubMed:34367195).</text>
</comment>
<comment type="catalytic activity">
    <reaction evidence="4">
        <text>alpha-D-glucose 1-phosphate = alpha-D-glucose 6-phosphate</text>
        <dbReference type="Rhea" id="RHEA:23536"/>
        <dbReference type="ChEBI" id="CHEBI:58225"/>
        <dbReference type="ChEBI" id="CHEBI:58601"/>
        <dbReference type="EC" id="5.4.2.2"/>
    </reaction>
</comment>
<comment type="catalytic activity">
    <reaction evidence="9">
        <text>O-phospho-L-seryl-[protein] + alpha-D-glucose 1-phosphate = alpha-D-glucose 1,6-bisphosphate + L-seryl-[protein]</text>
        <dbReference type="Rhea" id="RHEA:68748"/>
        <dbReference type="Rhea" id="RHEA-COMP:9863"/>
        <dbReference type="Rhea" id="RHEA-COMP:11604"/>
        <dbReference type="ChEBI" id="CHEBI:29999"/>
        <dbReference type="ChEBI" id="CHEBI:58392"/>
        <dbReference type="ChEBI" id="CHEBI:58601"/>
        <dbReference type="ChEBI" id="CHEBI:83421"/>
    </reaction>
</comment>
<comment type="catalytic activity">
    <reaction evidence="9">
        <text>alpha-D-glucose 1,6-bisphosphate + L-seryl-[protein] = O-phospho-L-seryl-[protein] + alpha-D-glucose 6-phosphate</text>
        <dbReference type="Rhea" id="RHEA:68752"/>
        <dbReference type="Rhea" id="RHEA-COMP:9863"/>
        <dbReference type="Rhea" id="RHEA-COMP:11604"/>
        <dbReference type="ChEBI" id="CHEBI:29999"/>
        <dbReference type="ChEBI" id="CHEBI:58225"/>
        <dbReference type="ChEBI" id="CHEBI:58392"/>
        <dbReference type="ChEBI" id="CHEBI:83421"/>
    </reaction>
</comment>
<comment type="cofactor">
    <cofactor evidence="1">
        <name>Mg(2+)</name>
        <dbReference type="ChEBI" id="CHEBI:18420"/>
    </cofactor>
    <text evidence="1">Binds 1 Mg(2+) ion per subunit.</text>
</comment>
<comment type="activity regulation">
    <text evidence="4">Inhibited by the Calvin cycle intermediates fructose-1,6-bisphosphate and ribulose-1,5-bisphosphate.</text>
</comment>
<comment type="biophysicochemical properties">
    <kinetics>
        <KM evidence="4">98.5 uM for alpha-D-glucose 1-phosphate</KM>
        <Vmax evidence="4">4.5 umol/min/mg enzyme with alpha-D-glucose 1-phosphate as substrate</Vmax>
    </kinetics>
</comment>
<comment type="subunit">
    <text evidence="1">Monomer.</text>
</comment>
<comment type="subcellular location">
    <subcellularLocation>
        <location evidence="3">Plastid</location>
        <location evidence="3">Chloroplast</location>
    </subcellularLocation>
</comment>
<comment type="tissue specificity">
    <text evidence="4">Expressed in flowers, siliques and germinating seeds.</text>
</comment>
<comment type="disruption phenotype">
    <text evidence="4 5">Reduced oil content in seeds (PubMed:10759515). Absence of starch granules in both the hypocotyl endodermis and the root columella associated with reduced hypocotyl negative gravitropism but normal phototropism, leading to axillary branches with wider branch angles (PubMed:34367195).</text>
</comment>
<comment type="similarity">
    <text evidence="8">Belongs to the phosphohexose mutase family.</text>
</comment>